<evidence type="ECO:0000250" key="1">
    <source>
        <dbReference type="UniProtKB" id="Q9Y5Y5"/>
    </source>
</evidence>
<evidence type="ECO:0000255" key="2"/>
<evidence type="ECO:0000256" key="3">
    <source>
        <dbReference type="SAM" id="MobiDB-lite"/>
    </source>
</evidence>
<evidence type="ECO:0000305" key="4"/>
<organism>
    <name type="scientific">Xenopus tropicalis</name>
    <name type="common">Western clawed frog</name>
    <name type="synonym">Silurana tropicalis</name>
    <dbReference type="NCBI Taxonomy" id="8364"/>
    <lineage>
        <taxon>Eukaryota</taxon>
        <taxon>Metazoa</taxon>
        <taxon>Chordata</taxon>
        <taxon>Craniata</taxon>
        <taxon>Vertebrata</taxon>
        <taxon>Euteleostomi</taxon>
        <taxon>Amphibia</taxon>
        <taxon>Batrachia</taxon>
        <taxon>Anura</taxon>
        <taxon>Pipoidea</taxon>
        <taxon>Pipidae</taxon>
        <taxon>Xenopodinae</taxon>
        <taxon>Xenopus</taxon>
        <taxon>Silurana</taxon>
    </lineage>
</organism>
<proteinExistence type="evidence at transcript level"/>
<accession>B0JYZ2</accession>
<sequence length="340" mass="38773">MAARYWDKLQDLSQKYKDYVIQNPTGATQLESAVRMLSYLIAGRFADSHELSELVYSASNLLALLNDGILRKELLAPPPTEGSRRRLLTWLGVLESLEVFIEIGAARAWGDRTRWAAILIIQLLKACLRIVLLFWYRAGIQSSPPVTPLDREGILNQAEDNSNSGSSCFVGRRSSRAVRSLDDSASSHRRFWRSPQIHDGKQRNTGETESDKDGSELGTLGTLAEAIHILRPITHLLSLATWGQKSWKPWMVAAALDITSISLLSDVRNLSHRERAELRRRMFLLLYYLLRSPFYNHYTETRLLLLLRLLGDYVPGVGLVARPLMDYLPVWQKIYFYNWG</sequence>
<feature type="chain" id="PRO_0000366964" description="Peroxisomal membrane protein PEX16">
    <location>
        <begin position="1"/>
        <end position="340"/>
    </location>
</feature>
<feature type="topological domain" description="Cytoplasmic" evidence="2">
    <location>
        <begin position="1"/>
        <end position="89"/>
    </location>
</feature>
<feature type="transmembrane region" description="Helical" evidence="2">
    <location>
        <begin position="90"/>
        <end position="110"/>
    </location>
</feature>
<feature type="topological domain" description="Peroxisomal" evidence="2">
    <location>
        <begin position="111"/>
        <end position="114"/>
    </location>
</feature>
<feature type="transmembrane region" description="Helical" evidence="2">
    <location>
        <begin position="115"/>
        <end position="136"/>
    </location>
</feature>
<feature type="topological domain" description="Cytoplasmic" evidence="2">
    <location>
        <begin position="137"/>
        <end position="340"/>
    </location>
</feature>
<feature type="region of interest" description="Required for peroxisomal location" evidence="1">
    <location>
        <begin position="71"/>
        <end position="86"/>
    </location>
</feature>
<feature type="region of interest" description="Disordered" evidence="3">
    <location>
        <begin position="196"/>
        <end position="216"/>
    </location>
</feature>
<feature type="compositionally biased region" description="Basic and acidic residues" evidence="3">
    <location>
        <begin position="196"/>
        <end position="215"/>
    </location>
</feature>
<comment type="function">
    <text evidence="1">Involved in peroxisome biogenesis.</text>
</comment>
<comment type="subcellular location">
    <subcellularLocation>
        <location evidence="1">Peroxisome membrane</location>
        <topology evidence="1">Multi-pass membrane protein</topology>
    </subcellularLocation>
</comment>
<comment type="similarity">
    <text evidence="4">Belongs to the peroxin-16 family.</text>
</comment>
<reference key="1">
    <citation type="submission" date="2008-02" db="EMBL/GenBank/DDBJ databases">
        <authorList>
            <consortium name="NIH - Xenopus Gene Collection (XGC) project"/>
        </authorList>
    </citation>
    <scope>NUCLEOTIDE SEQUENCE [LARGE SCALE MRNA]</scope>
    <source>
        <tissue>Embryo</tissue>
    </source>
</reference>
<protein>
    <recommendedName>
        <fullName>Peroxisomal membrane protein PEX16</fullName>
    </recommendedName>
    <alternativeName>
        <fullName>Peroxin-16</fullName>
    </alternativeName>
    <alternativeName>
        <fullName>Peroxisomal biogenesis factor 16</fullName>
    </alternativeName>
</protein>
<name>PEX16_XENTR</name>
<gene>
    <name type="primary">pex16</name>
</gene>
<dbReference type="EMBL" id="BC158973">
    <property type="protein sequence ID" value="AAI58974.1"/>
    <property type="molecule type" value="mRNA"/>
</dbReference>
<dbReference type="RefSeq" id="NP_001120111.1">
    <property type="nucleotide sequence ID" value="NM_001126639.1"/>
</dbReference>
<dbReference type="FunCoup" id="B0JYZ2">
    <property type="interactions" value="2417"/>
</dbReference>
<dbReference type="STRING" id="8364.ENSXETP00000028884"/>
<dbReference type="GeneID" id="100145130"/>
<dbReference type="KEGG" id="xtr:100145130"/>
<dbReference type="AGR" id="Xenbase:XB-GENE-1011467"/>
<dbReference type="CTD" id="9409"/>
<dbReference type="Xenbase" id="XB-GENE-1011467">
    <property type="gene designation" value="pex16"/>
</dbReference>
<dbReference type="InParanoid" id="B0JYZ2"/>
<dbReference type="OMA" id="PTWQSTY"/>
<dbReference type="OrthoDB" id="2021143at2759"/>
<dbReference type="Reactome" id="R-XTR-9603798">
    <property type="pathway name" value="Class I peroxisomal membrane protein import"/>
</dbReference>
<dbReference type="Proteomes" id="UP000008143">
    <property type="component" value="Chromosome 4"/>
</dbReference>
<dbReference type="GO" id="GO:0005778">
    <property type="term" value="C:peroxisomal membrane"/>
    <property type="evidence" value="ECO:0007669"/>
    <property type="project" value="UniProtKB-SubCell"/>
</dbReference>
<dbReference type="GO" id="GO:0007031">
    <property type="term" value="P:peroxisome organization"/>
    <property type="evidence" value="ECO:0007669"/>
    <property type="project" value="UniProtKB-KW"/>
</dbReference>
<dbReference type="InterPro" id="IPR013919">
    <property type="entry name" value="Pex16"/>
</dbReference>
<dbReference type="PANTHER" id="PTHR13299">
    <property type="entry name" value="PEROXISOMAL MEMBRANE PROTEIN PEX16"/>
    <property type="match status" value="1"/>
</dbReference>
<dbReference type="PANTHER" id="PTHR13299:SF0">
    <property type="entry name" value="PEROXISOMAL MEMBRANE PROTEIN PEX16"/>
    <property type="match status" value="1"/>
</dbReference>
<dbReference type="Pfam" id="PF08610">
    <property type="entry name" value="Pex16"/>
    <property type="match status" value="1"/>
</dbReference>
<keyword id="KW-0472">Membrane</keyword>
<keyword id="KW-0576">Peroxisome</keyword>
<keyword id="KW-0962">Peroxisome biogenesis</keyword>
<keyword id="KW-1185">Reference proteome</keyword>
<keyword id="KW-0812">Transmembrane</keyword>
<keyword id="KW-1133">Transmembrane helix</keyword>